<organism>
    <name type="scientific">Mus musculus</name>
    <name type="common">Mouse</name>
    <dbReference type="NCBI Taxonomy" id="10090"/>
    <lineage>
        <taxon>Eukaryota</taxon>
        <taxon>Metazoa</taxon>
        <taxon>Chordata</taxon>
        <taxon>Craniata</taxon>
        <taxon>Vertebrata</taxon>
        <taxon>Euteleostomi</taxon>
        <taxon>Mammalia</taxon>
        <taxon>Eutheria</taxon>
        <taxon>Euarchontoglires</taxon>
        <taxon>Glires</taxon>
        <taxon>Rodentia</taxon>
        <taxon>Myomorpha</taxon>
        <taxon>Muroidea</taxon>
        <taxon>Muridae</taxon>
        <taxon>Murinae</taxon>
        <taxon>Mus</taxon>
        <taxon>Mus</taxon>
    </lineage>
</organism>
<protein>
    <recommendedName>
        <fullName>Cytochrome P450 2D10</fullName>
        <ecNumber>1.14.14.1</ecNumber>
    </recommendedName>
    <alternativeName>
        <fullName>CYPIID10</fullName>
    </alternativeName>
    <alternativeName>
        <fullName>Cytochrome P450-16-alpha</fullName>
    </alternativeName>
    <alternativeName>
        <fullName>Cytochrome P450CB</fullName>
    </alternativeName>
    <alternativeName>
        <fullName>Testosterone 16-alpha hydroxylase</fullName>
    </alternativeName>
</protein>
<keyword id="KW-0256">Endoplasmic reticulum</keyword>
<keyword id="KW-0349">Heme</keyword>
<keyword id="KW-0408">Iron</keyword>
<keyword id="KW-0472">Membrane</keyword>
<keyword id="KW-0479">Metal-binding</keyword>
<keyword id="KW-0492">Microsome</keyword>
<keyword id="KW-0503">Monooxygenase</keyword>
<keyword id="KW-0560">Oxidoreductase</keyword>
<keyword id="KW-0597">Phosphoprotein</keyword>
<keyword id="KW-1185">Reference proteome</keyword>
<dbReference type="EC" id="1.14.14.1"/>
<dbReference type="EMBL" id="M24263">
    <property type="protein sequence ID" value="AAA79023.1"/>
    <property type="molecule type" value="Genomic_DNA"/>
</dbReference>
<dbReference type="EMBL" id="M27167">
    <property type="protein sequence ID" value="AAA39878.1"/>
    <property type="molecule type" value="mRNA"/>
</dbReference>
<dbReference type="EMBL" id="BC010989">
    <property type="protein sequence ID" value="AAH10989.1"/>
    <property type="molecule type" value="mRNA"/>
</dbReference>
<dbReference type="EMBL" id="BC057924">
    <property type="protein sequence ID" value="AAH57924.1"/>
    <property type="molecule type" value="mRNA"/>
</dbReference>
<dbReference type="CCDS" id="CCDS27690.1"/>
<dbReference type="PIR" id="A30247">
    <property type="entry name" value="A30247"/>
</dbReference>
<dbReference type="RefSeq" id="NP_034135.2">
    <property type="nucleotide sequence ID" value="NM_010005.3"/>
</dbReference>
<dbReference type="SMR" id="P24456"/>
<dbReference type="FunCoup" id="P24456">
    <property type="interactions" value="1435"/>
</dbReference>
<dbReference type="IntAct" id="P24456">
    <property type="interactions" value="4"/>
</dbReference>
<dbReference type="STRING" id="10090.ENSMUSP00000072555"/>
<dbReference type="GlyGen" id="P24456">
    <property type="glycosylation" value="1 site, 1 O-linked glycan (1 site)"/>
</dbReference>
<dbReference type="iPTMnet" id="P24456"/>
<dbReference type="PhosphoSitePlus" id="P24456"/>
<dbReference type="SwissPalm" id="P24456"/>
<dbReference type="jPOST" id="P24456"/>
<dbReference type="PaxDb" id="10090-ENSMUSP00000072555"/>
<dbReference type="PeptideAtlas" id="P24456"/>
<dbReference type="ProteomicsDB" id="283617"/>
<dbReference type="DNASU" id="13101"/>
<dbReference type="Ensembl" id="ENSMUST00000072776.5">
    <property type="protein sequence ID" value="ENSMUSP00000072555.4"/>
    <property type="gene ID" value="ENSMUSG00000094806.3"/>
</dbReference>
<dbReference type="GeneID" id="13101"/>
<dbReference type="KEGG" id="mmu:13101"/>
<dbReference type="UCSC" id="uc007wzf.2">
    <property type="organism name" value="mouse"/>
</dbReference>
<dbReference type="AGR" id="MGI:88602"/>
<dbReference type="CTD" id="13101"/>
<dbReference type="MGI" id="MGI:88602">
    <property type="gene designation" value="Cyp2d10"/>
</dbReference>
<dbReference type="VEuPathDB" id="HostDB:ENSMUSG00000094806"/>
<dbReference type="eggNOG" id="KOG0156">
    <property type="taxonomic scope" value="Eukaryota"/>
</dbReference>
<dbReference type="GeneTree" id="ENSGT00940000153331"/>
<dbReference type="HOGENOM" id="CLU_001570_22_0_1"/>
<dbReference type="InParanoid" id="P24456"/>
<dbReference type="OMA" id="GHDLDCC"/>
<dbReference type="OrthoDB" id="3934656at2759"/>
<dbReference type="PhylomeDB" id="P24456"/>
<dbReference type="TreeFam" id="TF352043"/>
<dbReference type="BioGRID-ORCS" id="13101">
    <property type="hits" value="2 hits in 79 CRISPR screens"/>
</dbReference>
<dbReference type="ChiTaRS" id="Cyp2d10">
    <property type="organism name" value="mouse"/>
</dbReference>
<dbReference type="PRO" id="PR:P24456"/>
<dbReference type="Proteomes" id="UP000000589">
    <property type="component" value="Chromosome 15"/>
</dbReference>
<dbReference type="RNAct" id="P24456">
    <property type="molecule type" value="protein"/>
</dbReference>
<dbReference type="Bgee" id="ENSMUSG00000094806">
    <property type="expression patterns" value="Expressed in left lobe of liver and 66 other cell types or tissues"/>
</dbReference>
<dbReference type="ExpressionAtlas" id="P24456">
    <property type="expression patterns" value="baseline and differential"/>
</dbReference>
<dbReference type="GO" id="GO:0005789">
    <property type="term" value="C:endoplasmic reticulum membrane"/>
    <property type="evidence" value="ECO:0007669"/>
    <property type="project" value="UniProtKB-SubCell"/>
</dbReference>
<dbReference type="GO" id="GO:0020037">
    <property type="term" value="F:heme binding"/>
    <property type="evidence" value="ECO:0007669"/>
    <property type="project" value="InterPro"/>
</dbReference>
<dbReference type="GO" id="GO:0005506">
    <property type="term" value="F:iron ion binding"/>
    <property type="evidence" value="ECO:0007669"/>
    <property type="project" value="InterPro"/>
</dbReference>
<dbReference type="GO" id="GO:0016712">
    <property type="term" value="F:oxidoreductase activity, acting on paired donors, with incorporation or reduction of molecular oxygen, reduced flavin or flavoprotein as one donor, and incorporation of one atom of oxygen"/>
    <property type="evidence" value="ECO:0007669"/>
    <property type="project" value="UniProtKB-EC"/>
</dbReference>
<dbReference type="CDD" id="cd20663">
    <property type="entry name" value="CYP2D"/>
    <property type="match status" value="1"/>
</dbReference>
<dbReference type="FunFam" id="1.10.630.10:FF:000004">
    <property type="entry name" value="cytochrome P450 2D15 isoform X1"/>
    <property type="match status" value="1"/>
</dbReference>
<dbReference type="Gene3D" id="1.10.630.10">
    <property type="entry name" value="Cytochrome P450"/>
    <property type="match status" value="1"/>
</dbReference>
<dbReference type="InterPro" id="IPR001128">
    <property type="entry name" value="Cyt_P450"/>
</dbReference>
<dbReference type="InterPro" id="IPR017972">
    <property type="entry name" value="Cyt_P450_CS"/>
</dbReference>
<dbReference type="InterPro" id="IPR002401">
    <property type="entry name" value="Cyt_P450_E_grp-I"/>
</dbReference>
<dbReference type="InterPro" id="IPR008069">
    <property type="entry name" value="Cyt_P450_E_grp-I_CYP2D-like"/>
</dbReference>
<dbReference type="InterPro" id="IPR036396">
    <property type="entry name" value="Cyt_P450_sf"/>
</dbReference>
<dbReference type="InterPro" id="IPR050182">
    <property type="entry name" value="Cytochrome_P450_fam2"/>
</dbReference>
<dbReference type="PANTHER" id="PTHR24300">
    <property type="entry name" value="CYTOCHROME P450 508A4-RELATED"/>
    <property type="match status" value="1"/>
</dbReference>
<dbReference type="PANTHER" id="PTHR24300:SF119">
    <property type="entry name" value="CYTOCHROME P450-RELATED"/>
    <property type="match status" value="1"/>
</dbReference>
<dbReference type="Pfam" id="PF00067">
    <property type="entry name" value="p450"/>
    <property type="match status" value="1"/>
</dbReference>
<dbReference type="PRINTS" id="PR00463">
    <property type="entry name" value="EP450I"/>
</dbReference>
<dbReference type="PRINTS" id="PR01686">
    <property type="entry name" value="EP450ICYP2D"/>
</dbReference>
<dbReference type="PRINTS" id="PR00385">
    <property type="entry name" value="P450"/>
</dbReference>
<dbReference type="SUPFAM" id="SSF48264">
    <property type="entry name" value="Cytochrome P450"/>
    <property type="match status" value="1"/>
</dbReference>
<dbReference type="PROSITE" id="PS00086">
    <property type="entry name" value="CYTOCHROME_P450"/>
    <property type="match status" value="1"/>
</dbReference>
<name>CP2DA_MOUSE</name>
<comment type="function">
    <text>Cytochromes P450 are a group of heme-thiolate monooxygenases. In liver microsomes, this enzyme is involved in an NADPH-dependent electron transport pathway. It oxidizes a variety of structurally unrelated compounds, including steroids, fatty acids, and xenobiotics.</text>
</comment>
<comment type="catalytic activity">
    <reaction>
        <text>an organic molecule + reduced [NADPH--hemoprotein reductase] + O2 = an alcohol + oxidized [NADPH--hemoprotein reductase] + H2O + H(+)</text>
        <dbReference type="Rhea" id="RHEA:17149"/>
        <dbReference type="Rhea" id="RHEA-COMP:11964"/>
        <dbReference type="Rhea" id="RHEA-COMP:11965"/>
        <dbReference type="ChEBI" id="CHEBI:15377"/>
        <dbReference type="ChEBI" id="CHEBI:15378"/>
        <dbReference type="ChEBI" id="CHEBI:15379"/>
        <dbReference type="ChEBI" id="CHEBI:30879"/>
        <dbReference type="ChEBI" id="CHEBI:57618"/>
        <dbReference type="ChEBI" id="CHEBI:58210"/>
        <dbReference type="ChEBI" id="CHEBI:142491"/>
        <dbReference type="EC" id="1.14.14.1"/>
    </reaction>
</comment>
<comment type="cofactor">
    <cofactor evidence="1">
        <name>heme</name>
        <dbReference type="ChEBI" id="CHEBI:30413"/>
    </cofactor>
</comment>
<comment type="subcellular location">
    <subcellularLocation>
        <location>Endoplasmic reticulum membrane</location>
        <topology>Peripheral membrane protein</topology>
    </subcellularLocation>
    <subcellularLocation>
        <location>Microsome membrane</location>
        <topology>Peripheral membrane protein</topology>
    </subcellularLocation>
</comment>
<comment type="induction">
    <text>P450 can be induced to high levels in liver and other tissues by various foreign compounds, including drugs, pesticides, and carcinogens.</text>
</comment>
<comment type="similarity">
    <text evidence="3">Belongs to the cytochrome P450 family.</text>
</comment>
<accession>P24456</accession>
<accession>Q64490</accession>
<reference key="1">
    <citation type="journal article" date="1989" name="J. Biol. Chem.">
        <title>Gene family of male-specific testosterone 16 alpha-hydroxylase (C-P-450(16 alpha)) in mice. Organization, differential regulation, and chromosome localization.</title>
        <authorList>
            <person name="Wong G."/>
            <person name="Itakura T."/>
            <person name="Kawajiri K."/>
            <person name="Skow L."/>
            <person name="Negishi M."/>
        </authorList>
    </citation>
    <scope>NUCLEOTIDE SEQUENCE</scope>
</reference>
<reference key="2">
    <citation type="journal article" date="1989" name="Biochemistry">
        <title>Functional characterization of two cytochrome P-450s within the mouse, male-specific steroid 16 alpha-hydroxylase gene family: expression in mammalian cells and chimeric proteins.</title>
        <authorList>
            <person name="Ichikawa T."/>
            <person name="Itakura T."/>
            <person name="Negishi M."/>
        </authorList>
    </citation>
    <scope>NUCLEOTIDE SEQUENCE [MRNA]</scope>
    <source>
        <strain>129/J</strain>
        <tissue>Liver</tissue>
    </source>
</reference>
<reference key="3">
    <citation type="journal article" date="2004" name="Genome Res.">
        <title>The status, quality, and expansion of the NIH full-length cDNA project: the Mammalian Gene Collection (MGC).</title>
        <authorList>
            <consortium name="The MGC Project Team"/>
        </authorList>
    </citation>
    <scope>NUCLEOTIDE SEQUENCE [LARGE SCALE MRNA]</scope>
    <source>
        <tissue>Liver</tissue>
        <tissue>Salivary gland</tissue>
    </source>
</reference>
<reference key="4">
    <citation type="journal article" date="2010" name="Cell">
        <title>A tissue-specific atlas of mouse protein phosphorylation and expression.</title>
        <authorList>
            <person name="Huttlin E.L."/>
            <person name="Jedrychowski M.P."/>
            <person name="Elias J.E."/>
            <person name="Goswami T."/>
            <person name="Rad R."/>
            <person name="Beausoleil S.A."/>
            <person name="Villen J."/>
            <person name="Haas W."/>
            <person name="Sowa M.E."/>
            <person name="Gygi S.P."/>
        </authorList>
    </citation>
    <scope>IDENTIFICATION BY MASS SPECTROMETRY [LARGE SCALE ANALYSIS]</scope>
    <source>
        <tissue>Liver</tissue>
    </source>
</reference>
<sequence length="504" mass="57233">MELLTGAGLWSVAIFTVIFILLVDLMHRHQRWTSRYPPGPVPWPVLGNLLQVDLDNMPYSLYKLQNRYGDVFSLQMGWKPMVVINGLKAMKEVLLTCGEDTADRPQVPIFEYLGVKPGSQGVVLAPYGPEWREQRRFSVSTLRNFGLGKKSLEDWVTKEARHLCDAFTAQAGQPINPNTMLNNAVCNVIASLIFARRFEYEDPYLIRMQKVLEDSLTEISGLIPEVLNMFPILLRIPGLPGKVFQGQKSLLAIVENLLTENRNTWDPDQPPRNLTDAFLAEIEKVKGNAESSFNDENLRMVVLDLFTAGMVTTSTTLSWALLLMILHPDVQRRVQQEIDAVIGQVRHPEMADQARMPYTNAVIHEVQRFGDIAPLNLPRITSRDIEVQDFLIPKGSILIPNMSSVLKDETVWEKPLRFHPEHFLDAQGHFVKPEAFMPFSAGRRSCLGEPLARMELFLFFTCLLQHFSFSVPNGQPRPRNLGVFPFPVAPYPYQLCAVMREQGH</sequence>
<gene>
    <name type="primary">Cyp2d10</name>
    <name type="synonym">Cyp2d-10</name>
</gene>
<proteinExistence type="evidence at protein level"/>
<feature type="chain" id="PRO_0000051735" description="Cytochrome P450 2D10">
    <location>
        <begin position="1"/>
        <end position="504"/>
    </location>
</feature>
<feature type="binding site" description="axial binding residue">
    <location>
        <position position="446"/>
    </location>
    <ligand>
        <name>heme</name>
        <dbReference type="ChEBI" id="CHEBI:30413"/>
    </ligand>
    <ligandPart>
        <name>Fe</name>
        <dbReference type="ChEBI" id="CHEBI:18248"/>
    </ligandPart>
</feature>
<feature type="modified residue" description="Phosphoserine" evidence="2">
    <location>
        <position position="249"/>
    </location>
</feature>
<feature type="sequence conflict" description="In Ref. 2; AAA39878." evidence="3" ref="2">
    <original>L</original>
    <variation>Q</variation>
    <location>
        <position position="46"/>
    </location>
</feature>
<feature type="sequence conflict" description="In Ref. 1; AAA79023." evidence="3" ref="1">
    <original>GLIP</original>
    <variation>LAYS</variation>
    <location>
        <begin position="221"/>
        <end position="224"/>
    </location>
</feature>
<evidence type="ECO:0000250" key="1"/>
<evidence type="ECO:0000250" key="2">
    <source>
        <dbReference type="UniProtKB" id="P10634"/>
    </source>
</evidence>
<evidence type="ECO:0000305" key="3"/>